<protein>
    <recommendedName>
        <fullName>Uncharacterized protein YneK</fullName>
    </recommendedName>
</protein>
<sequence>MVTPVSISNYISLPDDFPVRNIAPQVKEVLKDFIDALSTIICNEEWRTSLNINSATKKIFNNLDNLSYIQRTSFRGNDTLYNEKVQFKLTYPARNGRHKENIEFQVVINLSPIYLDNFRHDGEINIFCAPNPKPVTMGRVFQTGVERVLFLFLNDFIEQFPMINPGVPIKRAHTPHIEPLPSDHHTAADYLRQFDLLVLNFISRGNFVILPRLWNNSEVHRWFVNKDPNLITAILDITDSELKEDLLQSLMDSLGSNKHVLPEVCICFLSLLAEQESPHFQNLFLFFANMLLHYHQFMNPNESDLNDVLMPASLSDDKIIKHMARRTLKLFVKNETPPKVTHEDLVKNRPRSPVRPPIPATAKTPDLPERH</sequence>
<evidence type="ECO:0000256" key="1">
    <source>
        <dbReference type="SAM" id="MobiDB-lite"/>
    </source>
</evidence>
<gene>
    <name type="primary">yneK</name>
    <name type="ordered locus">b1527</name>
    <name type="ordered locus">JW1520</name>
</gene>
<keyword id="KW-1185">Reference proteome</keyword>
<proteinExistence type="predicted"/>
<accession>P76150</accession>
<accession>Q2MB94</accession>
<feature type="chain" id="PRO_0000168950" description="Uncharacterized protein YneK">
    <location>
        <begin position="1"/>
        <end position="371"/>
    </location>
</feature>
<feature type="region of interest" description="Disordered" evidence="1">
    <location>
        <begin position="339"/>
        <end position="371"/>
    </location>
</feature>
<dbReference type="EMBL" id="U00096">
    <property type="protein sequence ID" value="AAC74600.1"/>
    <property type="molecule type" value="Genomic_DNA"/>
</dbReference>
<dbReference type="EMBL" id="AP009048">
    <property type="protein sequence ID" value="BAE76462.1"/>
    <property type="molecule type" value="Genomic_DNA"/>
</dbReference>
<dbReference type="PIR" id="B64907">
    <property type="entry name" value="B64907"/>
</dbReference>
<dbReference type="RefSeq" id="NP_416044.1">
    <property type="nucleotide sequence ID" value="NC_000913.3"/>
</dbReference>
<dbReference type="RefSeq" id="WP_000258599.1">
    <property type="nucleotide sequence ID" value="NZ_LN832404.1"/>
</dbReference>
<dbReference type="BioGRID" id="4261697">
    <property type="interactions" value="8"/>
</dbReference>
<dbReference type="FunCoup" id="P76150">
    <property type="interactions" value="23"/>
</dbReference>
<dbReference type="IntAct" id="P76150">
    <property type="interactions" value="2"/>
</dbReference>
<dbReference type="STRING" id="511145.b1527"/>
<dbReference type="PaxDb" id="511145-b1527"/>
<dbReference type="EnsemblBacteria" id="AAC74600">
    <property type="protein sequence ID" value="AAC74600"/>
    <property type="gene ID" value="b1527"/>
</dbReference>
<dbReference type="GeneID" id="946080"/>
<dbReference type="KEGG" id="ecj:JW1520"/>
<dbReference type="KEGG" id="eco:b1527"/>
<dbReference type="KEGG" id="ecoc:C3026_08825"/>
<dbReference type="PATRIC" id="fig|511145.12.peg.1596"/>
<dbReference type="EchoBASE" id="EB3580"/>
<dbReference type="eggNOG" id="ENOG5033PRV">
    <property type="taxonomic scope" value="Bacteria"/>
</dbReference>
<dbReference type="HOGENOM" id="CLU_069783_0_0_6"/>
<dbReference type="InParanoid" id="P76150"/>
<dbReference type="OMA" id="HPDHHTA"/>
<dbReference type="OrthoDB" id="9911723at2"/>
<dbReference type="BioCyc" id="EcoCyc:G6813-MONOMER"/>
<dbReference type="PRO" id="PR:P76150"/>
<dbReference type="Proteomes" id="UP000000625">
    <property type="component" value="Chromosome"/>
</dbReference>
<dbReference type="NCBIfam" id="NF033404">
    <property type="entry name" value="YneK"/>
    <property type="match status" value="1"/>
</dbReference>
<name>YNEK_ECOLI</name>
<organism>
    <name type="scientific">Escherichia coli (strain K12)</name>
    <dbReference type="NCBI Taxonomy" id="83333"/>
    <lineage>
        <taxon>Bacteria</taxon>
        <taxon>Pseudomonadati</taxon>
        <taxon>Pseudomonadota</taxon>
        <taxon>Gammaproteobacteria</taxon>
        <taxon>Enterobacterales</taxon>
        <taxon>Enterobacteriaceae</taxon>
        <taxon>Escherichia</taxon>
    </lineage>
</organism>
<reference key="1">
    <citation type="journal article" date="1997" name="Science">
        <title>The complete genome sequence of Escherichia coli K-12.</title>
        <authorList>
            <person name="Blattner F.R."/>
            <person name="Plunkett G. III"/>
            <person name="Bloch C.A."/>
            <person name="Perna N.T."/>
            <person name="Burland V."/>
            <person name="Riley M."/>
            <person name="Collado-Vides J."/>
            <person name="Glasner J.D."/>
            <person name="Rode C.K."/>
            <person name="Mayhew G.F."/>
            <person name="Gregor J."/>
            <person name="Davis N.W."/>
            <person name="Kirkpatrick H.A."/>
            <person name="Goeden M.A."/>
            <person name="Rose D.J."/>
            <person name="Mau B."/>
            <person name="Shao Y."/>
        </authorList>
    </citation>
    <scope>NUCLEOTIDE SEQUENCE [LARGE SCALE GENOMIC DNA]</scope>
    <source>
        <strain>K12 / MG1655 / ATCC 47076</strain>
    </source>
</reference>
<reference key="2">
    <citation type="journal article" date="2006" name="Mol. Syst. Biol.">
        <title>Highly accurate genome sequences of Escherichia coli K-12 strains MG1655 and W3110.</title>
        <authorList>
            <person name="Hayashi K."/>
            <person name="Morooka N."/>
            <person name="Yamamoto Y."/>
            <person name="Fujita K."/>
            <person name="Isono K."/>
            <person name="Choi S."/>
            <person name="Ohtsubo E."/>
            <person name="Baba T."/>
            <person name="Wanner B.L."/>
            <person name="Mori H."/>
            <person name="Horiuchi T."/>
        </authorList>
    </citation>
    <scope>NUCLEOTIDE SEQUENCE [LARGE SCALE GENOMIC DNA]</scope>
    <source>
        <strain>K12 / W3110 / ATCC 27325 / DSM 5911</strain>
    </source>
</reference>